<evidence type="ECO:0000250" key="1"/>
<evidence type="ECO:0000256" key="2">
    <source>
        <dbReference type="SAM" id="MobiDB-lite"/>
    </source>
</evidence>
<evidence type="ECO:0000269" key="3">
    <source>
    </source>
</evidence>
<evidence type="ECO:0000305" key="4"/>
<evidence type="ECO:0007829" key="5">
    <source>
        <dbReference type="PDB" id="4YXB"/>
    </source>
</evidence>
<evidence type="ECO:0007829" key="6">
    <source>
        <dbReference type="PDB" id="4YXC"/>
    </source>
</evidence>
<accession>P26418</accession>
<organism>
    <name type="scientific">Salmonella typhimurium (strain LT2 / SGSC1412 / ATCC 700720)</name>
    <dbReference type="NCBI Taxonomy" id="99287"/>
    <lineage>
        <taxon>Bacteria</taxon>
        <taxon>Pseudomonadati</taxon>
        <taxon>Pseudomonadota</taxon>
        <taxon>Gammaproteobacteria</taxon>
        <taxon>Enterobacterales</taxon>
        <taxon>Enterobacteriaceae</taxon>
        <taxon>Salmonella</taxon>
    </lineage>
</organism>
<gene>
    <name type="primary">fliM</name>
    <name type="synonym">cheC2</name>
    <name type="synonym">fla AII</name>
    <name type="synonym">fla QII</name>
    <name type="ordered locus">STM1976</name>
</gene>
<proteinExistence type="evidence at protein level"/>
<keyword id="KW-0002">3D-structure</keyword>
<keyword id="KW-0975">Bacterial flagellum</keyword>
<keyword id="KW-0997">Cell inner membrane</keyword>
<keyword id="KW-1003">Cell membrane</keyword>
<keyword id="KW-0145">Chemotaxis</keyword>
<keyword id="KW-0283">Flagellar rotation</keyword>
<keyword id="KW-0472">Membrane</keyword>
<keyword id="KW-1185">Reference proteome</keyword>
<dbReference type="EMBL" id="M24463">
    <property type="protein sequence ID" value="AAA27104.1"/>
    <property type="molecule type" value="Genomic_DNA"/>
</dbReference>
<dbReference type="EMBL" id="AE006468">
    <property type="protein sequence ID" value="AAL20888.1"/>
    <property type="molecule type" value="Genomic_DNA"/>
</dbReference>
<dbReference type="PIR" id="C44513">
    <property type="entry name" value="C30929"/>
</dbReference>
<dbReference type="RefSeq" id="NP_460929.1">
    <property type="nucleotide sequence ID" value="NC_003197.2"/>
</dbReference>
<dbReference type="RefSeq" id="WP_000502811.1">
    <property type="nucleotide sequence ID" value="NC_003197.2"/>
</dbReference>
<dbReference type="PDB" id="4YXB">
    <property type="method" value="X-ray"/>
    <property type="resolution" value="2.56 A"/>
    <property type="chains" value="A/B=245-334"/>
</dbReference>
<dbReference type="PDB" id="4YXC">
    <property type="method" value="X-ray"/>
    <property type="resolution" value="2.30 A"/>
    <property type="chains" value="B=245-334"/>
</dbReference>
<dbReference type="PDB" id="8UMD">
    <property type="method" value="EM"/>
    <property type="resolution" value="3.60 A"/>
    <property type="chains" value="C=1-334"/>
</dbReference>
<dbReference type="PDB" id="8UMX">
    <property type="method" value="EM"/>
    <property type="resolution" value="4.00 A"/>
    <property type="chains" value="C=1-334"/>
</dbReference>
<dbReference type="PDB" id="8UOX">
    <property type="method" value="EM"/>
    <property type="resolution" value="4.60 A"/>
    <property type="chains" value="C1/C2/C3/C4/C5/C6/C7/C8/C9/CA/CB/CC/CD/CE/CF/CG/CH/CI/CJ/CK/CL/CM/CN/CO/CP/CQ/CR/CS/CT/CU=1-334"/>
</dbReference>
<dbReference type="PDB" id="8UPL">
    <property type="method" value="EM"/>
    <property type="resolution" value="5.40 A"/>
    <property type="chains" value="C1/C2/C3/C4/C5/C6/C7/C8/C9/CA/CB/CC/CD/CE/CF/CG/CH/CI/CJ/CK/CL/CM/CN/CO/CP/CQ/CR/CS/CT/CU=1-334"/>
</dbReference>
<dbReference type="PDB" id="8VIB">
    <property type="method" value="EM"/>
    <property type="resolution" value="4.60 A"/>
    <property type="chains" value="M=51-334"/>
</dbReference>
<dbReference type="PDB" id="8VID">
    <property type="method" value="EM"/>
    <property type="resolution" value="5.90 A"/>
    <property type="chains" value="M=51-334"/>
</dbReference>
<dbReference type="PDB" id="8VKQ">
    <property type="method" value="EM"/>
    <property type="resolution" value="4.60 A"/>
    <property type="chains" value="BA/BD/BG/C/DC/DF/FB/FE/HA/HD/HG/JC/JF/K/LB/LE/M/NA/ND/NG/PC/PF/RB/RE/TA/TD/TG/V/VC/VF=51-334"/>
</dbReference>
<dbReference type="PDB" id="8VKR">
    <property type="method" value="EM"/>
    <property type="resolution" value="5.90 A"/>
    <property type="chains" value="BA/BD/BG/C/DC/DF/FB/FE/HA/HD/HG/JC/JF/K/LB/LE/M/NA/ND/NG/PC/PF/RB/RE/TA/TD/TG/V/VC/VF=51-334"/>
</dbReference>
<dbReference type="PDB" id="8WIW">
    <property type="method" value="EM"/>
    <property type="resolution" value="5.60 A"/>
    <property type="chains" value="7/A0/A3/AL/AR/AX/Ad/Aj/Ap/Av/B4/BG/BN/BU/Bb/Bi/Bp/Bw/CA/CH/CO/CV/Cc/Cj/Cq/Cx/S/T/U/V=1-334"/>
</dbReference>
<dbReference type="PDB" id="8WO5">
    <property type="method" value="EM"/>
    <property type="resolution" value="7.40 A"/>
    <property type="chains" value="B1/B7/Bc/Bi/Bo/Bu/C8/CC/CI/CO/CU/Ca/Cg/Cm/Cs/Cy/D3/D9/DF/DL/DM/DS/DY/De/Dk/Dq/Dw/EG/EM/ES=1-334"/>
</dbReference>
<dbReference type="PDB" id="8WOE">
    <property type="method" value="EM"/>
    <property type="resolution" value="4.30 A"/>
    <property type="chains" value="B4/Bb/Bi/Bp/Bw/C0/CA/CH/CO/CV/Cc/Cj/Cq/Cx/D2/D8/DC/DF/DX/Dd/Dj/Dp/Dv/E5/EI/EP/EW/Eq/Er/Es=1-334"/>
</dbReference>
<dbReference type="PDB" id="8XP0">
    <property type="method" value="EM"/>
    <property type="resolution" value="4.00 A"/>
    <property type="chains" value="O/U/a=1-334"/>
</dbReference>
<dbReference type="PDB" id="8XP1">
    <property type="method" value="EM"/>
    <property type="resolution" value="4.40 A"/>
    <property type="chains" value="S/T/U=1-334"/>
</dbReference>
<dbReference type="PDB" id="8YJT">
    <property type="method" value="EM"/>
    <property type="resolution" value="5.90 A"/>
    <property type="chains" value="5/A3/A9/AA/AG/AM/AS/AY/Ae/Ak/Aq/Aw/B1/B7/BE/BK/BQ/BW/Bc/Bi/Bo/Bu/CC/CI/CO/CU/Ca/Cg/Cm/Cs=1-334"/>
</dbReference>
<dbReference type="PDB" id="9N49">
    <property type="method" value="EM"/>
    <property type="resolution" value="3.00 A"/>
    <property type="chains" value="M=1-334"/>
</dbReference>
<dbReference type="PDBsum" id="4YXB"/>
<dbReference type="PDBsum" id="4YXC"/>
<dbReference type="PDBsum" id="8UMD"/>
<dbReference type="PDBsum" id="8UMX"/>
<dbReference type="PDBsum" id="8UOX"/>
<dbReference type="PDBsum" id="8UPL"/>
<dbReference type="PDBsum" id="8VIB"/>
<dbReference type="PDBsum" id="8VID"/>
<dbReference type="PDBsum" id="8VKQ"/>
<dbReference type="PDBsum" id="8VKR"/>
<dbReference type="PDBsum" id="8WIW"/>
<dbReference type="PDBsum" id="8WO5"/>
<dbReference type="PDBsum" id="8WOE"/>
<dbReference type="PDBsum" id="8XP0"/>
<dbReference type="PDBsum" id="8XP1"/>
<dbReference type="PDBsum" id="8YJT"/>
<dbReference type="PDBsum" id="9N49"/>
<dbReference type="EMDB" id="EMD-37570"/>
<dbReference type="EMDB" id="EMD-37679"/>
<dbReference type="EMDB" id="EMD-37684"/>
<dbReference type="EMDB" id="EMD-38546"/>
<dbReference type="EMDB" id="EMD-38547"/>
<dbReference type="EMDB" id="EMD-39349"/>
<dbReference type="EMDB" id="EMD-42387"/>
<dbReference type="EMDB" id="EMD-42439"/>
<dbReference type="EMDB" id="EMD-42451"/>
<dbReference type="EMDB" id="EMD-48871"/>
<dbReference type="SMR" id="P26418"/>
<dbReference type="IntAct" id="P26418">
    <property type="interactions" value="1"/>
</dbReference>
<dbReference type="STRING" id="99287.STM1976"/>
<dbReference type="PaxDb" id="99287-STM1976"/>
<dbReference type="GeneID" id="1253497"/>
<dbReference type="GeneID" id="66756493"/>
<dbReference type="KEGG" id="stm:STM1976"/>
<dbReference type="PATRIC" id="fig|99287.12.peg.2093"/>
<dbReference type="HOGENOM" id="CLU_052646_1_2_6"/>
<dbReference type="OMA" id="MRIEGRP"/>
<dbReference type="PhylomeDB" id="P26418"/>
<dbReference type="BioCyc" id="SENT99287:STM1976-MONOMER"/>
<dbReference type="Proteomes" id="UP000001014">
    <property type="component" value="Chromosome"/>
</dbReference>
<dbReference type="GO" id="GO:0009425">
    <property type="term" value="C:bacterial-type flagellum basal body"/>
    <property type="evidence" value="ECO:0007669"/>
    <property type="project" value="UniProtKB-SubCell"/>
</dbReference>
<dbReference type="GO" id="GO:0005886">
    <property type="term" value="C:plasma membrane"/>
    <property type="evidence" value="ECO:0007669"/>
    <property type="project" value="UniProtKB-SubCell"/>
</dbReference>
<dbReference type="GO" id="GO:0003774">
    <property type="term" value="F:cytoskeletal motor activity"/>
    <property type="evidence" value="ECO:0007669"/>
    <property type="project" value="InterPro"/>
</dbReference>
<dbReference type="GO" id="GO:0071978">
    <property type="term" value="P:bacterial-type flagellum-dependent swarming motility"/>
    <property type="evidence" value="ECO:0000318"/>
    <property type="project" value="GO_Central"/>
</dbReference>
<dbReference type="GO" id="GO:0050918">
    <property type="term" value="P:positive chemotaxis"/>
    <property type="evidence" value="ECO:0000318"/>
    <property type="project" value="GO_Central"/>
</dbReference>
<dbReference type="CDD" id="cd17908">
    <property type="entry name" value="FliM"/>
    <property type="match status" value="1"/>
</dbReference>
<dbReference type="Gene3D" id="3.40.1550.10">
    <property type="entry name" value="CheC-like"/>
    <property type="match status" value="1"/>
</dbReference>
<dbReference type="Gene3D" id="2.30.330.10">
    <property type="entry name" value="SpoA-like"/>
    <property type="match status" value="1"/>
</dbReference>
<dbReference type="InterPro" id="IPR028976">
    <property type="entry name" value="CheC-like_sf"/>
</dbReference>
<dbReference type="InterPro" id="IPR001689">
    <property type="entry name" value="Flag_FliM"/>
</dbReference>
<dbReference type="InterPro" id="IPR001543">
    <property type="entry name" value="FliN-like_C"/>
</dbReference>
<dbReference type="InterPro" id="IPR036429">
    <property type="entry name" value="SpoA-like_sf"/>
</dbReference>
<dbReference type="NCBIfam" id="TIGR01397">
    <property type="entry name" value="fliM_switch"/>
    <property type="match status" value="1"/>
</dbReference>
<dbReference type="PANTHER" id="PTHR30034">
    <property type="entry name" value="FLAGELLAR MOTOR SWITCH PROTEIN FLIM"/>
    <property type="match status" value="1"/>
</dbReference>
<dbReference type="PANTHER" id="PTHR30034:SF3">
    <property type="entry name" value="FLAGELLAR MOTOR SWITCH PROTEIN FLIM"/>
    <property type="match status" value="1"/>
</dbReference>
<dbReference type="Pfam" id="PF02154">
    <property type="entry name" value="FliM"/>
    <property type="match status" value="1"/>
</dbReference>
<dbReference type="Pfam" id="PF01052">
    <property type="entry name" value="FliMN_C"/>
    <property type="match status" value="1"/>
</dbReference>
<dbReference type="PIRSF" id="PIRSF002888">
    <property type="entry name" value="FliM"/>
    <property type="match status" value="1"/>
</dbReference>
<dbReference type="PRINTS" id="PR00955">
    <property type="entry name" value="FLGMOTORFLIM"/>
</dbReference>
<dbReference type="SUPFAM" id="SSF103039">
    <property type="entry name" value="CheC-like"/>
    <property type="match status" value="1"/>
</dbReference>
<dbReference type="SUPFAM" id="SSF101801">
    <property type="entry name" value="Surface presentation of antigens (SPOA)"/>
    <property type="match status" value="1"/>
</dbReference>
<reference key="1">
    <citation type="journal article" date="1989" name="J. Bacteriol.">
        <title>Flagellar switch of Salmonella typhimurium: gene sequences and deduced protein sequences.</title>
        <authorList>
            <person name="Kihara M."/>
            <person name="Homma M."/>
            <person name="Kutsukake K."/>
            <person name="Macnab R.M."/>
        </authorList>
    </citation>
    <scope>NUCLEOTIDE SEQUENCE [GENOMIC DNA]</scope>
</reference>
<reference key="2">
    <citation type="journal article" date="2001" name="Nature">
        <title>Complete genome sequence of Salmonella enterica serovar Typhimurium LT2.</title>
        <authorList>
            <person name="McClelland M."/>
            <person name="Sanderson K.E."/>
            <person name="Spieth J."/>
            <person name="Clifton S.W."/>
            <person name="Latreille P."/>
            <person name="Courtney L."/>
            <person name="Porwollik S."/>
            <person name="Ali J."/>
            <person name="Dante M."/>
            <person name="Du F."/>
            <person name="Hou S."/>
            <person name="Layman D."/>
            <person name="Leonard S."/>
            <person name="Nguyen C."/>
            <person name="Scott K."/>
            <person name="Holmes A."/>
            <person name="Grewal N."/>
            <person name="Mulvaney E."/>
            <person name="Ryan E."/>
            <person name="Sun H."/>
            <person name="Florea L."/>
            <person name="Miller W."/>
            <person name="Stoneking T."/>
            <person name="Nhan M."/>
            <person name="Waterston R."/>
            <person name="Wilson R.K."/>
        </authorList>
    </citation>
    <scope>NUCLEOTIDE SEQUENCE [LARGE SCALE GENOMIC DNA]</scope>
    <source>
        <strain>LT2 / SGSC1412 / ATCC 700720</strain>
    </source>
</reference>
<reference key="3">
    <citation type="journal article" date="2010" name="Mol. Cell">
        <title>The c-di-GMP binding protein YcgR controls flagellar motor direction and speed to affect chemotaxis by a 'backstop brake' mechanism.</title>
        <authorList>
            <person name="Paul K."/>
            <person name="Nieto V."/>
            <person name="Carlquist W.C."/>
            <person name="Blair D.F."/>
            <person name="Harshey R.M."/>
        </authorList>
    </citation>
    <scope>MUTAGENESIS OF ASN-155 AND LEU-160</scope>
    <source>
        <strain>ATCC 14028 / SGSC 2980 / CDC 6516-60 / NCTC 12023</strain>
    </source>
</reference>
<name>FLIM_SALTY</name>
<feature type="chain" id="PRO_0000180929" description="Flagellar motor switch protein FliM">
    <location>
        <begin position="1"/>
        <end position="334"/>
    </location>
</feature>
<feature type="region of interest" description="Disordered" evidence="2">
    <location>
        <begin position="15"/>
        <end position="40"/>
    </location>
</feature>
<feature type="mutagenesis site" description="Altered motor bias with clockwise rotation, partially suppresses a yhjH disruption." evidence="3">
    <original>N</original>
    <variation>E</variation>
    <location>
        <position position="155"/>
    </location>
</feature>
<feature type="mutagenesis site" description="Altered motor bias with clockwise rotation, partially suppresses a yhjH disruption." evidence="3">
    <original>L</original>
    <variation>D</variation>
    <location>
        <position position="160"/>
    </location>
</feature>
<feature type="helix" evidence="5">
    <location>
        <begin position="247"/>
        <end position="249"/>
    </location>
</feature>
<feature type="strand" evidence="6">
    <location>
        <begin position="259"/>
        <end position="271"/>
    </location>
</feature>
<feature type="helix" evidence="6">
    <location>
        <begin position="272"/>
        <end position="276"/>
    </location>
</feature>
<feature type="strand" evidence="6">
    <location>
        <begin position="283"/>
        <end position="286"/>
    </location>
</feature>
<feature type="strand" evidence="6">
    <location>
        <begin position="290"/>
        <end position="296"/>
    </location>
</feature>
<feature type="strand" evidence="6">
    <location>
        <begin position="299"/>
        <end position="309"/>
    </location>
</feature>
<feature type="strand" evidence="6">
    <location>
        <begin position="312"/>
        <end position="322"/>
    </location>
</feature>
<protein>
    <recommendedName>
        <fullName>Flagellar motor switch protein FliM</fullName>
    </recommendedName>
</protein>
<sequence length="334" mass="37858">MGDSILSQAEIDALLNGDSDTKDEPTPGIASDSDIRPYDPNTQRRVVRERLQALEIINERFARQFRMGLFNLLRRSPDITVGAIRIQPYHEFARNLPVPTNLNLIHLKPLRGTGLVVFSPSLVFIAVDNLFGGDGRFPTKVEGREFTHTEQRVINRMLKLALEGYSDAWKAINPLEVEYVRSEMQVKFTNITTSPNDIVVNTPFHVEIGNLTGEFNICLPFSMIEPLRELLVNPPLENSRHEDQNWRDNLVRQVQHSELELVANFADIPLRLSQILKLKPGDVLPIEKPDRIIAHVDGVPVLTSQYGTVNGQYALRVEHLINPILNSLNEEQPK</sequence>
<comment type="function">
    <text evidence="1">FliM is one of three proteins (FliG, FliN, FliM) that forms the rotor-mounted switch complex (C ring), located at the base of the basal body. This complex interacts with the CheY and CheZ chemotaxis proteins, in addition to contacting components of the motor that determine the direction of flagellar rotation (By similarity).</text>
</comment>
<comment type="subcellular location">
    <subcellularLocation>
        <location>Cell inner membrane</location>
        <topology>Peripheral membrane protein</topology>
    </subcellularLocation>
    <subcellularLocation>
        <location>Bacterial flagellum basal body</location>
    </subcellularLocation>
</comment>
<comment type="similarity">
    <text evidence="4">Belongs to the FliM family.</text>
</comment>